<organism>
    <name type="scientific">Gossypium barbadense</name>
    <name type="common">Sea Island cotton</name>
    <name type="synonym">Hibiscus barbadensis</name>
    <dbReference type="NCBI Taxonomy" id="3634"/>
    <lineage>
        <taxon>Eukaryota</taxon>
        <taxon>Viridiplantae</taxon>
        <taxon>Streptophyta</taxon>
        <taxon>Embryophyta</taxon>
        <taxon>Tracheophyta</taxon>
        <taxon>Spermatophyta</taxon>
        <taxon>Magnoliopsida</taxon>
        <taxon>eudicotyledons</taxon>
        <taxon>Gunneridae</taxon>
        <taxon>Pentapetalae</taxon>
        <taxon>rosids</taxon>
        <taxon>malvids</taxon>
        <taxon>Malvales</taxon>
        <taxon>Malvaceae</taxon>
        <taxon>Malvoideae</taxon>
        <taxon>Gossypium</taxon>
    </lineage>
</organism>
<gene>
    <name evidence="5" type="primary">EIR5A</name>
    <name evidence="6" type="ORF">ES319_A13G211700v1</name>
</gene>
<feature type="chain" id="PRO_0000462493" description="EPD1-interacting receptor-like cytoplasmic serine/threonine-protein kinase 5A">
    <location>
        <begin position="1"/>
        <end position="462"/>
    </location>
</feature>
<feature type="domain" description="Protein kinase" evidence="2">
    <location>
        <begin position="85"/>
        <end position="366"/>
    </location>
</feature>
<feature type="active site" description="Proton acceptor" evidence="2 3">
    <location>
        <position position="215"/>
    </location>
</feature>
<feature type="binding site" evidence="2">
    <location>
        <begin position="91"/>
        <end position="99"/>
    </location>
    <ligand>
        <name>ATP</name>
        <dbReference type="ChEBI" id="CHEBI:30616"/>
    </ligand>
</feature>
<feature type="binding site" evidence="2">
    <location>
        <position position="120"/>
    </location>
    <ligand>
        <name>ATP</name>
        <dbReference type="ChEBI" id="CHEBI:30616"/>
    </ligand>
</feature>
<feature type="modified residue" description="Phosphotyrosine" evidence="4">
    <location>
        <position position="165"/>
    </location>
</feature>
<feature type="modified residue" description="Phosphotyrosine" evidence="4">
    <location>
        <position position="167"/>
    </location>
</feature>
<feature type="mutagenesis site" description="Reduced phosphorylation associated with lower induction of pathogenesis-related genes (e.g. PR5 and PR16) in response to pathogen-associated molecular patterns (PAMPs). Impaired phosphorylation and altered induction of PR genes in response to PAMPs; when associated with F-167." evidence="4">
    <original>Y</original>
    <variation>F</variation>
    <location>
        <position position="165"/>
    </location>
</feature>
<feature type="mutagenesis site" description="Reduced phosphorylation associated with lower induction of pathogenesis-related genes (e.g. PR5 and PR16) in response to pathogen-associated molecular patterns (PAMPs). Impaired phosphorylation and altered induction of PR genes in response to PAMPs; when associated with F-165." evidence="4">
    <original>Y</original>
    <variation>F</variation>
    <location>
        <position position="167"/>
    </location>
</feature>
<feature type="mutagenesis site" description="Normal phosphorylation." evidence="4">
    <original>S</original>
    <variation>A</variation>
    <location>
        <position position="172"/>
    </location>
</feature>
<feature type="mutagenesis site" description="Normal phosphorylation." evidence="4">
    <original>S</original>
    <variation>A</variation>
    <location>
        <position position="219"/>
    </location>
</feature>
<feature type="mutagenesis site" description="Normal phosphorylation." evidence="4">
    <original>S</original>
    <variation>A</variation>
    <location>
        <position position="225"/>
    </location>
</feature>
<feature type="mutagenesis site" description="Normal phosphorylation." evidence="4">
    <original>S</original>
    <variation>A</variation>
    <location>
        <position position="291"/>
    </location>
</feature>
<feature type="mutagenesis site" description="Normal phosphorylation." evidence="4">
    <original>S</original>
    <variation>A</variation>
    <location>
        <position position="421"/>
    </location>
</feature>
<accession>A0A5J5T2N2</accession>
<reference key="1">
    <citation type="journal article" date="2020" name="Nat. Genet.">
        <title>Genomic diversifications of five Gossypium allopolyploid species and their impact on cotton improvement.</title>
        <authorList>
            <person name="Chen Z.J."/>
            <person name="Sreedasyam A."/>
            <person name="Ando A."/>
            <person name="Song Q."/>
            <person name="De Santiago L.M."/>
            <person name="Hulse-Kemp A.M."/>
            <person name="Ding M."/>
            <person name="Ye W."/>
            <person name="Kirkbride R.C."/>
            <person name="Jenkins J."/>
            <person name="Plott C."/>
            <person name="Lovell J."/>
            <person name="Lin Y.M."/>
            <person name="Vaughn R."/>
            <person name="Liu B."/>
            <person name="Simpson S."/>
            <person name="Scheffler B.E."/>
            <person name="Wen L."/>
            <person name="Saski C.A."/>
            <person name="Grover C.E."/>
            <person name="Hu G."/>
            <person name="Conover J.L."/>
            <person name="Carlson J.W."/>
            <person name="Shu S."/>
            <person name="Boston L.B."/>
            <person name="Williams M."/>
            <person name="Peterson D.G."/>
            <person name="McGee K."/>
            <person name="Jones D.C."/>
            <person name="Wendel J.F."/>
            <person name="Stelly D.M."/>
            <person name="Grimwood J."/>
            <person name="Schmutz J."/>
        </authorList>
    </citation>
    <scope>NUCLEOTIDE SEQUENCE [LARGE SCALE GENOMIC DNA]</scope>
    <source>
        <strain>cv. 3-79</strain>
    </source>
</reference>
<reference key="2">
    <citation type="journal article" date="2025" name="Adv. Sci.">
        <title>Recognition of a fungal effector potentiates pathogen-associated molecular pattern-triggered immunity in cotton.</title>
        <authorList>
            <person name="Sun L."/>
            <person name="Li X."/>
            <person name="Zhong J."/>
            <person name="Wang Y."/>
            <person name="Li B."/>
            <person name="Ye Z."/>
            <person name="Zhang J."/>
        </authorList>
    </citation>
    <scope>FUNCTION</scope>
    <scope>DISRUPTION PHENOTYPE</scope>
    <scope>INTERACTION WITH V.DAHLIAE EPD1</scope>
    <scope>INDUCTION BY V.DAHLIAE EPD1</scope>
    <scope>TISSUE SPECIFICITY</scope>
    <scope>PHOSPHORYLATION AT TYR-165 AND TYR-167</scope>
    <scope>MUTAGENESIS OF TYR-165; TYR-167; SER-172; SER-219; SER-225; SER-291 AND SER-421</scope>
    <source>
        <strain>cv. Hai7124</strain>
    </source>
</reference>
<sequence>MAVMKFTWRSIIPRCSKGIEEPEAEAEAEPETKKQDSKQGSFSRLAMIDLSYPSSRFTEDLSTSLAGSNLYVFTLEELKVITQCFSSANFLGEGGFGPVHKGFIDDNLRPGLEAQPVAVKLLDLEGLQGHREWLTEVVFLAQLSHPHLVKLIGYCCEDEHRLLVYEYMPRGSLENQLFAKYSVPLPWSTRMKIALGAAKGLAYLHEAEKPVIYRDFKASNILLDSDYSAKLSDFGLAKDGPEGDKTHVSTRVMGTRGYAAPEYIMTGHLTAMSDVYSFGVVLLELLTGRRSLDKSRSPREQNLAEWARPMLNESRRLARIMDPKLEGQYSETGARKAAALAYQCLSHRAKQRPKMSDVVNILEPLLDYEETSVGTFVYTVPTHQNGGSPPKDDTDTKECEAKTELKKENGDHHNRHHHRRSHKSRDGHRHRNKSSSQSSVHSENYTSKQTLENGSNEECNID</sequence>
<keyword id="KW-0067">ATP-binding</keyword>
<keyword id="KW-1003">Cell membrane</keyword>
<keyword id="KW-0928">Hypersensitive response elicitation</keyword>
<keyword id="KW-0418">Kinase</keyword>
<keyword id="KW-0472">Membrane</keyword>
<keyword id="KW-0547">Nucleotide-binding</keyword>
<keyword id="KW-0597">Phosphoprotein</keyword>
<keyword id="KW-0611">Plant defense</keyword>
<keyword id="KW-0723">Serine/threonine-protein kinase</keyword>
<keyword id="KW-0808">Transferase</keyword>
<evidence type="ECO:0000250" key="1">
    <source>
        <dbReference type="UniProtKB" id="Q9ZUF4"/>
    </source>
</evidence>
<evidence type="ECO:0000255" key="2">
    <source>
        <dbReference type="PROSITE-ProRule" id="PRU00159"/>
    </source>
</evidence>
<evidence type="ECO:0000255" key="3">
    <source>
        <dbReference type="PROSITE-ProRule" id="PRU10027"/>
    </source>
</evidence>
<evidence type="ECO:0000269" key="4">
    <source>
    </source>
</evidence>
<evidence type="ECO:0000303" key="5">
    <source>
    </source>
</evidence>
<evidence type="ECO:0000312" key="6">
    <source>
        <dbReference type="EMBL" id="KAB2049947.1"/>
    </source>
</evidence>
<name>EIR5A_GOSBA</name>
<protein>
    <recommendedName>
        <fullName evidence="5">EPD1-interacting receptor-like cytoplasmic serine/threonine-protein kinase 5A</fullName>
        <shortName evidence="5">GbEIR5A</shortName>
        <ecNumber evidence="3">2.7.11.1</ecNumber>
    </recommendedName>
</protein>
<proteinExistence type="evidence at protein level"/>
<comment type="function">
    <text evidence="4">Required for pathogen-associated molecular pattern (PAMP, e.g. chitin and flg22)-triggered immunity (PTI) involving reactive oxygen species (ROS) accumulation and triggering plant defense, including defense-related gene expression (e.g. PR1 and LOX) (PubMed:39488762). Ensures specific recognition of the EPD1 effector of Verticillium dahliae, resulting in a hypersensitive response known as effector-triggered immunity (ETI), characterized by the activation of programmed cell death to limit infection by the pathogen (PubMed:39488762). Priming plants with the incompatible pathogen V.dahliae leads to an increased resistance to compatible pathogens, as a result of systemic acquired resistance (SAR) (PubMed:39488762).</text>
</comment>
<comment type="catalytic activity">
    <reaction evidence="3">
        <text>L-seryl-[protein] + ATP = O-phospho-L-seryl-[protein] + ADP + H(+)</text>
        <dbReference type="Rhea" id="RHEA:17989"/>
        <dbReference type="Rhea" id="RHEA-COMP:9863"/>
        <dbReference type="Rhea" id="RHEA-COMP:11604"/>
        <dbReference type="ChEBI" id="CHEBI:15378"/>
        <dbReference type="ChEBI" id="CHEBI:29999"/>
        <dbReference type="ChEBI" id="CHEBI:30616"/>
        <dbReference type="ChEBI" id="CHEBI:83421"/>
        <dbReference type="ChEBI" id="CHEBI:456216"/>
        <dbReference type="EC" id="2.7.11.1"/>
    </reaction>
</comment>
<comment type="catalytic activity">
    <reaction evidence="3">
        <text>L-threonyl-[protein] + ATP = O-phospho-L-threonyl-[protein] + ADP + H(+)</text>
        <dbReference type="Rhea" id="RHEA:46608"/>
        <dbReference type="Rhea" id="RHEA-COMP:11060"/>
        <dbReference type="Rhea" id="RHEA-COMP:11605"/>
        <dbReference type="ChEBI" id="CHEBI:15378"/>
        <dbReference type="ChEBI" id="CHEBI:30013"/>
        <dbReference type="ChEBI" id="CHEBI:30616"/>
        <dbReference type="ChEBI" id="CHEBI:61977"/>
        <dbReference type="ChEBI" id="CHEBI:456216"/>
        <dbReference type="EC" id="2.7.11.1"/>
    </reaction>
</comment>
<comment type="subunit">
    <text evidence="4">Interacts with the Verticillium dahliae elicitor EPD1 (AC G2WWH6).</text>
</comment>
<comment type="subcellular location">
    <subcellularLocation>
        <location evidence="1">Cell membrane</location>
    </subcellularLocation>
</comment>
<comment type="tissue specificity">
    <text evidence="4">Mostly expressed in roots and, to a lesser extent, in leaves.</text>
</comment>
<comment type="induction">
    <text evidence="4">Induced by the V.dahliae elicitor EPD1 (AC G2WWH6).</text>
</comment>
<comment type="PTM">
    <text evidence="4">Phosphorylated at Tyr-165 and Tyr-167 in the presence of pathogen-associated molecular patterns (PAMPs); this triggers the expression of pathogenesis-related genes (e.g. PR5 and PR16).</text>
</comment>
<comment type="disruption phenotype">
    <text evidence="4">In plants missing both EIR5A and EIR5D, enhanced Verticillium dahliae virulence leading to altered accumulation of reactive oxygen species (ROS) and reduced activation of cell death (PubMed:39488762). This phenotype is due to both impaired V.dahliae EPD1 effector-triggered immunity (ETI), associated with cell death, and compromised pathogen-associated molecular patterns (PAMPs)-triggered immunity (PTI), charaterized by ROS production (PubMed:39488762).</text>
</comment>
<comment type="similarity">
    <text evidence="2">Belongs to the protein kinase superfamily. Ser/Thr protein kinase family.</text>
</comment>
<dbReference type="EC" id="2.7.11.1" evidence="3"/>
<dbReference type="EMBL" id="CM018214">
    <property type="protein sequence ID" value="KAB2049947.1"/>
    <property type="molecule type" value="Genomic_DNA"/>
</dbReference>
<dbReference type="OrthoDB" id="4062651at2759"/>
<dbReference type="Proteomes" id="UP000327439">
    <property type="component" value="Chromosome A13"/>
</dbReference>
<dbReference type="GO" id="GO:0005886">
    <property type="term" value="C:plasma membrane"/>
    <property type="evidence" value="ECO:0007669"/>
    <property type="project" value="UniProtKB-SubCell"/>
</dbReference>
<dbReference type="GO" id="GO:0005524">
    <property type="term" value="F:ATP binding"/>
    <property type="evidence" value="ECO:0007669"/>
    <property type="project" value="InterPro"/>
</dbReference>
<dbReference type="GO" id="GO:0004672">
    <property type="term" value="F:protein kinase activity"/>
    <property type="evidence" value="ECO:0007669"/>
    <property type="project" value="InterPro"/>
</dbReference>
<dbReference type="CDD" id="cd14066">
    <property type="entry name" value="STKc_IRAK"/>
    <property type="match status" value="1"/>
</dbReference>
<dbReference type="FunFam" id="1.10.510.10:FF:000258">
    <property type="entry name" value="Probable serine/threonine-protein kinase PBL8"/>
    <property type="match status" value="1"/>
</dbReference>
<dbReference type="FunFam" id="3.30.200.20:FF:000228">
    <property type="entry name" value="Serine/threonine-protein kinase BIK1"/>
    <property type="match status" value="1"/>
</dbReference>
<dbReference type="Gene3D" id="3.30.200.20">
    <property type="entry name" value="Phosphorylase Kinase, domain 1"/>
    <property type="match status" value="1"/>
</dbReference>
<dbReference type="Gene3D" id="1.10.510.10">
    <property type="entry name" value="Transferase(Phosphotransferase) domain 1"/>
    <property type="match status" value="1"/>
</dbReference>
<dbReference type="InterPro" id="IPR011009">
    <property type="entry name" value="Kinase-like_dom_sf"/>
</dbReference>
<dbReference type="InterPro" id="IPR050823">
    <property type="entry name" value="Plant_Ser_Thr_Prot_Kinase"/>
</dbReference>
<dbReference type="InterPro" id="IPR000719">
    <property type="entry name" value="Prot_kinase_dom"/>
</dbReference>
<dbReference type="InterPro" id="IPR001245">
    <property type="entry name" value="Ser-Thr/Tyr_kinase_cat_dom"/>
</dbReference>
<dbReference type="InterPro" id="IPR008271">
    <property type="entry name" value="Ser/Thr_kinase_AS"/>
</dbReference>
<dbReference type="PANTHER" id="PTHR45621">
    <property type="entry name" value="OS01G0588500 PROTEIN-RELATED"/>
    <property type="match status" value="1"/>
</dbReference>
<dbReference type="Pfam" id="PF07714">
    <property type="entry name" value="PK_Tyr_Ser-Thr"/>
    <property type="match status" value="1"/>
</dbReference>
<dbReference type="SUPFAM" id="SSF56112">
    <property type="entry name" value="Protein kinase-like (PK-like)"/>
    <property type="match status" value="1"/>
</dbReference>
<dbReference type="PROSITE" id="PS50011">
    <property type="entry name" value="PROTEIN_KINASE_DOM"/>
    <property type="match status" value="1"/>
</dbReference>
<dbReference type="PROSITE" id="PS00108">
    <property type="entry name" value="PROTEIN_KINASE_ST"/>
    <property type="match status" value="1"/>
</dbReference>